<comment type="function">
    <text evidence="1">May be involved in processing of pneumocyte surfactant precursors.</text>
</comment>
<comment type="subcellular location">
    <subcellularLocation>
        <location evidence="8">Secreted</location>
    </subcellularLocation>
</comment>
<comment type="tissue specificity">
    <text evidence="7">Expressed at the highest levels in the kidney, at a moderate level in the lung, and at low levels in the spleen and adipose tissue.</text>
</comment>
<comment type="similarity">
    <text evidence="8">Belongs to the peptidase A1 family.</text>
</comment>
<keyword id="KW-0064">Aspartyl protease</keyword>
<keyword id="KW-1015">Disulfide bond</keyword>
<keyword id="KW-0325">Glycoprotein</keyword>
<keyword id="KW-0378">Hydrolase</keyword>
<keyword id="KW-0645">Protease</keyword>
<keyword id="KW-1185">Reference proteome</keyword>
<keyword id="KW-0964">Secreted</keyword>
<keyword id="KW-0732">Signal</keyword>
<keyword id="KW-0865">Zymogen</keyword>
<reference key="1">
    <citation type="journal article" date="1997" name="FEBS Lett.">
        <title>Molecular cloning of a novel mouse aspartic protease-like protein that is expressed abundantly in the kidney.</title>
        <authorList>
            <person name="Mori K."/>
            <person name="Ogawa Y."/>
            <person name="Tamura N."/>
            <person name="Ebihara K."/>
            <person name="Aoki T."/>
            <person name="Muro S."/>
            <person name="Ozaki S."/>
            <person name="Tanaka I."/>
            <person name="Tashiro K."/>
            <person name="Nakao K."/>
        </authorList>
    </citation>
    <scope>NUCLEOTIDE SEQUENCE [MRNA]</scope>
    <scope>TISSUE SPECIFICITY</scope>
    <source>
        <strain>BALB/cJ</strain>
        <tissue>Kidney</tissue>
    </source>
</reference>
<reference key="2">
    <citation type="journal article" date="2000" name="Eur. J. Biochem.">
        <title>Molecular organization, expression and chromosomal localization of the mouse pronapsin gene.</title>
        <authorList>
            <person name="Tatnell P.J."/>
            <person name="Cook M."/>
            <person name="Peters C."/>
            <person name="Kay J."/>
        </authorList>
    </citation>
    <scope>NUCLEOTIDE SEQUENCE [GENOMIC DNA]</scope>
    <source>
        <strain>129/SvJ</strain>
    </source>
</reference>
<reference key="3">
    <citation type="journal article" date="2004" name="Genome Res.">
        <title>The status, quality, and expansion of the NIH full-length cDNA project: the Mammalian Gene Collection (MGC).</title>
        <authorList>
            <consortium name="The MGC Project Team"/>
        </authorList>
    </citation>
    <scope>NUCLEOTIDE SEQUENCE [LARGE SCALE MRNA]</scope>
    <source>
        <strain>FVB/N</strain>
        <tissue>Kidney</tissue>
    </source>
</reference>
<reference key="4">
    <citation type="journal article" date="2006" name="J. Proteome Res.">
        <title>Proteome-wide characterization of N-glycosylation events by diagonal chromatography.</title>
        <authorList>
            <person name="Ghesquiere B."/>
            <person name="Van Damme J."/>
            <person name="Martens L."/>
            <person name="Vandekerckhove J."/>
            <person name="Gevaert K."/>
        </authorList>
    </citation>
    <scope>GLYCOSYLATION [LARGE SCALE ANALYSIS] AT ASN-128</scope>
    <source>
        <strain>C57BL/6J</strain>
        <tissue>Plasma</tissue>
    </source>
</reference>
<reference key="5">
    <citation type="journal article" date="2010" name="Cell">
        <title>A tissue-specific atlas of mouse protein phosphorylation and expression.</title>
        <authorList>
            <person name="Huttlin E.L."/>
            <person name="Jedrychowski M.P."/>
            <person name="Elias J.E."/>
            <person name="Goswami T."/>
            <person name="Rad R."/>
            <person name="Beausoleil S.A."/>
            <person name="Villen J."/>
            <person name="Haas W."/>
            <person name="Sowa M.E."/>
            <person name="Gygi S.P."/>
        </authorList>
    </citation>
    <scope>IDENTIFICATION BY MASS SPECTROMETRY [LARGE SCALE ANALYSIS]</scope>
    <source>
        <tissue>Kidney</tissue>
        <tissue>Lung</tissue>
    </source>
</reference>
<name>NAPSA_MOUSE</name>
<feature type="signal peptide" evidence="2">
    <location>
        <begin position="1"/>
        <end position="16"/>
    </location>
</feature>
<feature type="propeptide" id="PRO_0000025998" description="Activation peptide" evidence="2">
    <location>
        <begin position="17"/>
        <end status="unknown"/>
    </location>
</feature>
<feature type="chain" id="PRO_0000025999" description="Napsin-A">
    <location>
        <begin status="unknown"/>
        <end position="419"/>
    </location>
</feature>
<feature type="domain" description="Peptidase A1" evidence="3">
    <location>
        <begin position="73"/>
        <end position="394"/>
    </location>
</feature>
<feature type="region of interest" description="Disordered" evidence="5">
    <location>
        <begin position="391"/>
        <end position="419"/>
    </location>
</feature>
<feature type="active site" evidence="4">
    <location>
        <position position="91"/>
    </location>
</feature>
<feature type="active site" evidence="4">
    <location>
        <position position="278"/>
    </location>
</feature>
<feature type="glycosylation site" description="N-linked (GlcNAc...) asparagine" evidence="2">
    <location>
        <position position="85"/>
    </location>
</feature>
<feature type="glycosylation site" description="N-linked (GlcNAc...) asparagine" evidence="6">
    <location>
        <position position="128"/>
    </location>
</feature>
<feature type="glycosylation site" description="N-linked (GlcNAc...) asparagine" evidence="2">
    <location>
        <position position="149"/>
    </location>
</feature>
<feature type="glycosylation site" description="N-linked (GlcNAc...) asparagine" evidence="2">
    <location>
        <position position="331"/>
    </location>
</feature>
<feature type="disulfide bond" evidence="1">
    <location>
        <begin position="104"/>
        <end position="111"/>
    </location>
</feature>
<feature type="disulfide bond" evidence="1">
    <location>
        <begin position="269"/>
        <end position="273"/>
    </location>
</feature>
<feature type="disulfide bond" evidence="1">
    <location>
        <begin position="312"/>
        <end position="349"/>
    </location>
</feature>
<protein>
    <recommendedName>
        <fullName>Napsin-A</fullName>
        <ecNumber>3.4.23.-</ecNumber>
    </recommendedName>
    <alternativeName>
        <fullName>KDAP-1</fullName>
    </alternativeName>
    <alternativeName>
        <fullName>Kidney-derived aspartic protease-like protein</fullName>
        <shortName>KAP</shortName>
    </alternativeName>
</protein>
<accession>O09043</accession>
<proteinExistence type="evidence at protein level"/>
<gene>
    <name type="primary">Napsa</name>
    <name type="synonym">Kdap</name>
    <name type="synonym">Nap</name>
</gene>
<dbReference type="EC" id="3.4.23.-"/>
<dbReference type="EMBL" id="D88899">
    <property type="protein sequence ID" value="BAA19004.1"/>
    <property type="molecule type" value="mRNA"/>
</dbReference>
<dbReference type="EMBL" id="AJ250718">
    <property type="protein sequence ID" value="CAB82907.1"/>
    <property type="molecule type" value="Genomic_DNA"/>
</dbReference>
<dbReference type="EMBL" id="AJ250719">
    <property type="protein sequence ID" value="CAB82907.1"/>
    <property type="status" value="JOINED"/>
    <property type="molecule type" value="Genomic_DNA"/>
</dbReference>
<dbReference type="EMBL" id="AJ250720">
    <property type="protein sequence ID" value="CAB82907.1"/>
    <property type="status" value="JOINED"/>
    <property type="molecule type" value="Genomic_DNA"/>
</dbReference>
<dbReference type="EMBL" id="BC014813">
    <property type="protein sequence ID" value="AAH14813.1"/>
    <property type="molecule type" value="mRNA"/>
</dbReference>
<dbReference type="CCDS" id="CCDS21212.1"/>
<dbReference type="RefSeq" id="NP_032463.1">
    <property type="nucleotide sequence ID" value="NM_008437.1"/>
</dbReference>
<dbReference type="SMR" id="O09043"/>
<dbReference type="FunCoup" id="O09043">
    <property type="interactions" value="193"/>
</dbReference>
<dbReference type="STRING" id="10090.ENSMUSP00000002274"/>
<dbReference type="MEROPS" id="A01.046"/>
<dbReference type="GlyCosmos" id="O09043">
    <property type="glycosylation" value="4 sites, No reported glycans"/>
</dbReference>
<dbReference type="GlyGen" id="O09043">
    <property type="glycosylation" value="4 sites"/>
</dbReference>
<dbReference type="iPTMnet" id="O09043"/>
<dbReference type="PhosphoSitePlus" id="O09043"/>
<dbReference type="jPOST" id="O09043"/>
<dbReference type="PaxDb" id="10090-ENSMUSP00000002274"/>
<dbReference type="PeptideAtlas" id="O09043"/>
<dbReference type="ProteomicsDB" id="287436"/>
<dbReference type="Antibodypedia" id="3755">
    <property type="antibodies" value="958 antibodies from 41 providers"/>
</dbReference>
<dbReference type="DNASU" id="16541"/>
<dbReference type="Ensembl" id="ENSMUST00000002274.10">
    <property type="protein sequence ID" value="ENSMUSP00000002274.9"/>
    <property type="gene ID" value="ENSMUSG00000002204.10"/>
</dbReference>
<dbReference type="GeneID" id="16541"/>
<dbReference type="KEGG" id="mmu:16541"/>
<dbReference type="UCSC" id="uc009gqe.1">
    <property type="organism name" value="mouse"/>
</dbReference>
<dbReference type="AGR" id="MGI:109365"/>
<dbReference type="CTD" id="9476"/>
<dbReference type="MGI" id="MGI:109365">
    <property type="gene designation" value="Napsa"/>
</dbReference>
<dbReference type="VEuPathDB" id="HostDB:ENSMUSG00000002204"/>
<dbReference type="eggNOG" id="KOG1339">
    <property type="taxonomic scope" value="Eukaryota"/>
</dbReference>
<dbReference type="GeneTree" id="ENSGT00940000160179"/>
<dbReference type="HOGENOM" id="CLU_013253_3_3_1"/>
<dbReference type="InParanoid" id="O09043"/>
<dbReference type="OMA" id="DYVIQIS"/>
<dbReference type="OrthoDB" id="771136at2759"/>
<dbReference type="PhylomeDB" id="O09043"/>
<dbReference type="TreeFam" id="TF314990"/>
<dbReference type="BRENDA" id="3.4.23.B1">
    <property type="organism ID" value="3474"/>
</dbReference>
<dbReference type="Reactome" id="R-MMU-5683826">
    <property type="pathway name" value="Surfactant metabolism"/>
</dbReference>
<dbReference type="BioGRID-ORCS" id="16541">
    <property type="hits" value="1 hit in 76 CRISPR screens"/>
</dbReference>
<dbReference type="ChiTaRS" id="Napsa">
    <property type="organism name" value="mouse"/>
</dbReference>
<dbReference type="PRO" id="PR:O09043"/>
<dbReference type="Proteomes" id="UP000000589">
    <property type="component" value="Chromosome 7"/>
</dbReference>
<dbReference type="RNAct" id="O09043">
    <property type="molecule type" value="protein"/>
</dbReference>
<dbReference type="Bgee" id="ENSMUSG00000002204">
    <property type="expression patterns" value="Expressed in right kidney and 118 other cell types or tissues"/>
</dbReference>
<dbReference type="ExpressionAtlas" id="O09043">
    <property type="expression patterns" value="baseline and differential"/>
</dbReference>
<dbReference type="GO" id="GO:0097208">
    <property type="term" value="C:alveolar lamellar body"/>
    <property type="evidence" value="ECO:0000314"/>
    <property type="project" value="UniProtKB"/>
</dbReference>
<dbReference type="GO" id="GO:0005615">
    <property type="term" value="C:extracellular space"/>
    <property type="evidence" value="ECO:0007669"/>
    <property type="project" value="Ensembl"/>
</dbReference>
<dbReference type="GO" id="GO:0005764">
    <property type="term" value="C:lysosome"/>
    <property type="evidence" value="ECO:0000314"/>
    <property type="project" value="UniProtKB"/>
</dbReference>
<dbReference type="GO" id="GO:0004190">
    <property type="term" value="F:aspartic-type endopeptidase activity"/>
    <property type="evidence" value="ECO:0007669"/>
    <property type="project" value="UniProtKB-KW"/>
</dbReference>
<dbReference type="GO" id="GO:0004175">
    <property type="term" value="F:endopeptidase activity"/>
    <property type="evidence" value="ECO:0000315"/>
    <property type="project" value="UniProtKB"/>
</dbReference>
<dbReference type="GO" id="GO:0033619">
    <property type="term" value="P:membrane protein proteolysis"/>
    <property type="evidence" value="ECO:0000315"/>
    <property type="project" value="UniProtKB"/>
</dbReference>
<dbReference type="GO" id="GO:0043129">
    <property type="term" value="P:surfactant homeostasis"/>
    <property type="evidence" value="ECO:0007669"/>
    <property type="project" value="Ensembl"/>
</dbReference>
<dbReference type="FunFam" id="2.40.70.10:FF:000048">
    <property type="entry name" value="Napsin A aspartic peptidase"/>
    <property type="match status" value="1"/>
</dbReference>
<dbReference type="FunFam" id="2.40.70.10:FF:000066">
    <property type="entry name" value="Napsin A aspartic peptidase"/>
    <property type="match status" value="1"/>
</dbReference>
<dbReference type="Gene3D" id="2.40.70.10">
    <property type="entry name" value="Acid Proteases"/>
    <property type="match status" value="2"/>
</dbReference>
<dbReference type="InterPro" id="IPR001461">
    <property type="entry name" value="Aspartic_peptidase_A1"/>
</dbReference>
<dbReference type="InterPro" id="IPR001969">
    <property type="entry name" value="Aspartic_peptidase_AS"/>
</dbReference>
<dbReference type="InterPro" id="IPR033121">
    <property type="entry name" value="PEPTIDASE_A1"/>
</dbReference>
<dbReference type="InterPro" id="IPR021109">
    <property type="entry name" value="Peptidase_aspartic_dom_sf"/>
</dbReference>
<dbReference type="PANTHER" id="PTHR47966">
    <property type="entry name" value="BETA-SITE APP-CLEAVING ENZYME, ISOFORM A-RELATED"/>
    <property type="match status" value="1"/>
</dbReference>
<dbReference type="PANTHER" id="PTHR47966:SF83">
    <property type="entry name" value="NAPSIN-A"/>
    <property type="match status" value="1"/>
</dbReference>
<dbReference type="Pfam" id="PF00026">
    <property type="entry name" value="Asp"/>
    <property type="match status" value="1"/>
</dbReference>
<dbReference type="PRINTS" id="PR00792">
    <property type="entry name" value="PEPSIN"/>
</dbReference>
<dbReference type="SUPFAM" id="SSF50630">
    <property type="entry name" value="Acid proteases"/>
    <property type="match status" value="1"/>
</dbReference>
<dbReference type="PROSITE" id="PS00141">
    <property type="entry name" value="ASP_PROTEASE"/>
    <property type="match status" value="2"/>
</dbReference>
<dbReference type="PROSITE" id="PS51767">
    <property type="entry name" value="PEPTIDASE_A1"/>
    <property type="match status" value="1"/>
</dbReference>
<organism>
    <name type="scientific">Mus musculus</name>
    <name type="common">Mouse</name>
    <dbReference type="NCBI Taxonomy" id="10090"/>
    <lineage>
        <taxon>Eukaryota</taxon>
        <taxon>Metazoa</taxon>
        <taxon>Chordata</taxon>
        <taxon>Craniata</taxon>
        <taxon>Vertebrata</taxon>
        <taxon>Euteleostomi</taxon>
        <taxon>Mammalia</taxon>
        <taxon>Eutheria</taxon>
        <taxon>Euarchontoglires</taxon>
        <taxon>Glires</taxon>
        <taxon>Rodentia</taxon>
        <taxon>Myomorpha</taxon>
        <taxon>Muroidea</taxon>
        <taxon>Muridae</taxon>
        <taxon>Murinae</taxon>
        <taxon>Mus</taxon>
        <taxon>Mus</taxon>
    </lineage>
</organism>
<evidence type="ECO:0000250" key="1"/>
<evidence type="ECO:0000255" key="2"/>
<evidence type="ECO:0000255" key="3">
    <source>
        <dbReference type="PROSITE-ProRule" id="PRU01103"/>
    </source>
</evidence>
<evidence type="ECO:0000255" key="4">
    <source>
        <dbReference type="PROSITE-ProRule" id="PRU10094"/>
    </source>
</evidence>
<evidence type="ECO:0000256" key="5">
    <source>
        <dbReference type="SAM" id="MobiDB-lite"/>
    </source>
</evidence>
<evidence type="ECO:0000269" key="6">
    <source>
    </source>
</evidence>
<evidence type="ECO:0000269" key="7">
    <source>
    </source>
</evidence>
<evidence type="ECO:0000305" key="8"/>
<sequence>MSPLLLLLLCLLLGNLEPEEAKLIRVPLQRIHLGHRILNPLNGWEQLAELSRTSTSGGNPSFVPLSKFMNTQYFGTIGLGTPPQNFTVVFDTGSSNLWVPSTRCHFFSLACWFHHRFNPKASSSFRPNGTKFAIQYGTGRLSGILSQDNLTIGGIHDAFVTFGEALWEPSLIFALAHFDGILGLGFPTLAVGGVQPPLDAMVEQGLLEKPVFSFYLNRDSEGSDGGELVLGGSDPAHYVPPLTFIPVTIPAYWQVHMESVKVGTGLSLCAQGCSAILDTGTSLITGPSEEIRALNKAIGGYPFLNGQYFIQCSKTPTLPPVSFHLGGVWFNLTGQDYVIKILQSDVGLCLLGFQALDIPKPAGPLWILGDVFLGPYVAVFDRGDKNVGPRVGLARAQSRSTDRAERRTTQAQFFKRRPG</sequence>